<evidence type="ECO:0000255" key="1">
    <source>
        <dbReference type="HAMAP-Rule" id="MF_00036"/>
    </source>
</evidence>
<sequence length="872" mass="96308">MKTMTSAEVRQMFLDFFKSKGHTVEPSQSLVPVNDPTLLWINSGVATLKKYFDGSVVPENPRLTNAQKAIRTNDIENVGKTARHHTMFEMLGNFSIGDYFRNEAIAFAWELLTSSEWFEFPAEKLYITYYPADKDTYNRWVEVGVDPTHLVPIEDNFWEIGAGPSGPDTEIFFDRGEIYDPEHVGLKLLAEDIENDRYIEIWNIVLSQFNANPAIPRSEYPELPQKNIDTGMGLERMVCIIQGGKTNFDTDLFLPIIREIEKLSGKTYSPDSENMSFKVIADHIRSLSFAIGDGALPGNEGRGYVLRRLLRRAVMHGKKLGIQGKFLASLVPTVGKIMQSYYPEVLEKEDFIMQIIDREEETFNRTIDAGQKLIDELLVNLKAEGKDRIEGADIFRLYDTYGFPVELTEELAEDEGFKIEHEGFKVAMKAQQDRARAAVVKGGSMGAQNETLSSIEVDSKFLYEDKKAQAKLLVAIKDDELVDEVTGKAQLVFDVTPFYAEMGGQVADHGVIKNADGQVVATVLDVQHAPHGQNLHSVETISPLKVGETYTLEIDEERRSAVVKNHTATHLLHAALHNIVGNHALQAGSLNEVEFLRFDFTHFAQVSKEELAEIERQVNEVIWQSLKVETIETYIATAKEMGAMALFGEKYGKNVRVVKIGDYSIELCGGTHTQTTSEIGLFKIIKEEGIGSGVRRIIAVTGQKAYEAFKDAENTLSEVAGLVKAPQASQIVAKVSNLQDELKAAQKENDALAGKLAASQSDEIFKNVQRAGSVSFIASQVTVPDAKGLRNLADIWKQKELSDILVLVATIGEKVSLLVASKSLDVKAGNLVKELAPFVDGRGGGKPDMAMAGGSNAAGIPELLTAVAEKLG</sequence>
<feature type="chain" id="PRO_0000347651" description="Alanine--tRNA ligase">
    <location>
        <begin position="1"/>
        <end position="872"/>
    </location>
</feature>
<feature type="binding site" evidence="1">
    <location>
        <position position="566"/>
    </location>
    <ligand>
        <name>Zn(2+)</name>
        <dbReference type="ChEBI" id="CHEBI:29105"/>
    </ligand>
</feature>
<feature type="binding site" evidence="1">
    <location>
        <position position="570"/>
    </location>
    <ligand>
        <name>Zn(2+)</name>
        <dbReference type="ChEBI" id="CHEBI:29105"/>
    </ligand>
</feature>
<feature type="binding site" evidence="1">
    <location>
        <position position="668"/>
    </location>
    <ligand>
        <name>Zn(2+)</name>
        <dbReference type="ChEBI" id="CHEBI:29105"/>
    </ligand>
</feature>
<feature type="binding site" evidence="1">
    <location>
        <position position="672"/>
    </location>
    <ligand>
        <name>Zn(2+)</name>
        <dbReference type="ChEBI" id="CHEBI:29105"/>
    </ligand>
</feature>
<proteinExistence type="inferred from homology"/>
<dbReference type="EC" id="6.1.1.7" evidence="1"/>
<dbReference type="EMBL" id="AM406671">
    <property type="protein sequence ID" value="CAL98475.1"/>
    <property type="molecule type" value="Genomic_DNA"/>
</dbReference>
<dbReference type="RefSeq" id="WP_011835657.1">
    <property type="nucleotide sequence ID" value="NC_009004.1"/>
</dbReference>
<dbReference type="SMR" id="A2RME6"/>
<dbReference type="STRING" id="416870.llmg_1906"/>
<dbReference type="KEGG" id="llm:llmg_1906"/>
<dbReference type="eggNOG" id="COG0013">
    <property type="taxonomic scope" value="Bacteria"/>
</dbReference>
<dbReference type="HOGENOM" id="CLU_004485_1_1_9"/>
<dbReference type="OrthoDB" id="9803884at2"/>
<dbReference type="PhylomeDB" id="A2RME6"/>
<dbReference type="Proteomes" id="UP000000364">
    <property type="component" value="Chromosome"/>
</dbReference>
<dbReference type="GO" id="GO:0005829">
    <property type="term" value="C:cytosol"/>
    <property type="evidence" value="ECO:0007669"/>
    <property type="project" value="TreeGrafter"/>
</dbReference>
<dbReference type="GO" id="GO:0004813">
    <property type="term" value="F:alanine-tRNA ligase activity"/>
    <property type="evidence" value="ECO:0007669"/>
    <property type="project" value="UniProtKB-UniRule"/>
</dbReference>
<dbReference type="GO" id="GO:0002161">
    <property type="term" value="F:aminoacyl-tRNA deacylase activity"/>
    <property type="evidence" value="ECO:0007669"/>
    <property type="project" value="TreeGrafter"/>
</dbReference>
<dbReference type="GO" id="GO:0005524">
    <property type="term" value="F:ATP binding"/>
    <property type="evidence" value="ECO:0007669"/>
    <property type="project" value="UniProtKB-UniRule"/>
</dbReference>
<dbReference type="GO" id="GO:0140096">
    <property type="term" value="F:catalytic activity, acting on a protein"/>
    <property type="evidence" value="ECO:0007669"/>
    <property type="project" value="UniProtKB-ARBA"/>
</dbReference>
<dbReference type="GO" id="GO:0016740">
    <property type="term" value="F:transferase activity"/>
    <property type="evidence" value="ECO:0007669"/>
    <property type="project" value="UniProtKB-ARBA"/>
</dbReference>
<dbReference type="GO" id="GO:0000049">
    <property type="term" value="F:tRNA binding"/>
    <property type="evidence" value="ECO:0007669"/>
    <property type="project" value="UniProtKB-KW"/>
</dbReference>
<dbReference type="GO" id="GO:0008270">
    <property type="term" value="F:zinc ion binding"/>
    <property type="evidence" value="ECO:0007669"/>
    <property type="project" value="UniProtKB-UniRule"/>
</dbReference>
<dbReference type="GO" id="GO:0006419">
    <property type="term" value="P:alanyl-tRNA aminoacylation"/>
    <property type="evidence" value="ECO:0007669"/>
    <property type="project" value="UniProtKB-UniRule"/>
</dbReference>
<dbReference type="CDD" id="cd00673">
    <property type="entry name" value="AlaRS_core"/>
    <property type="match status" value="1"/>
</dbReference>
<dbReference type="FunFam" id="3.10.310.40:FF:000001">
    <property type="entry name" value="Alanine--tRNA ligase"/>
    <property type="match status" value="1"/>
</dbReference>
<dbReference type="FunFam" id="3.30.54.20:FF:000001">
    <property type="entry name" value="Alanine--tRNA ligase"/>
    <property type="match status" value="1"/>
</dbReference>
<dbReference type="FunFam" id="3.30.930.10:FF:000046">
    <property type="entry name" value="Alanine--tRNA ligase"/>
    <property type="match status" value="1"/>
</dbReference>
<dbReference type="FunFam" id="3.30.980.10:FF:000004">
    <property type="entry name" value="Alanine--tRNA ligase, cytoplasmic"/>
    <property type="match status" value="1"/>
</dbReference>
<dbReference type="Gene3D" id="2.40.30.130">
    <property type="match status" value="1"/>
</dbReference>
<dbReference type="Gene3D" id="3.10.310.40">
    <property type="match status" value="1"/>
</dbReference>
<dbReference type="Gene3D" id="3.30.54.20">
    <property type="match status" value="1"/>
</dbReference>
<dbReference type="Gene3D" id="6.10.250.550">
    <property type="match status" value="1"/>
</dbReference>
<dbReference type="Gene3D" id="3.30.930.10">
    <property type="entry name" value="Bira Bifunctional Protein, Domain 2"/>
    <property type="match status" value="1"/>
</dbReference>
<dbReference type="Gene3D" id="3.30.980.10">
    <property type="entry name" value="Threonyl-trna Synthetase, Chain A, domain 2"/>
    <property type="match status" value="1"/>
</dbReference>
<dbReference type="HAMAP" id="MF_00036_B">
    <property type="entry name" value="Ala_tRNA_synth_B"/>
    <property type="match status" value="1"/>
</dbReference>
<dbReference type="InterPro" id="IPR006195">
    <property type="entry name" value="aa-tRNA-synth_II"/>
</dbReference>
<dbReference type="InterPro" id="IPR045864">
    <property type="entry name" value="aa-tRNA-synth_II/BPL/LPL"/>
</dbReference>
<dbReference type="InterPro" id="IPR002318">
    <property type="entry name" value="Ala-tRNA-lgiase_IIc"/>
</dbReference>
<dbReference type="InterPro" id="IPR018162">
    <property type="entry name" value="Ala-tRNA-ligase_IIc_anticod-bd"/>
</dbReference>
<dbReference type="InterPro" id="IPR018165">
    <property type="entry name" value="Ala-tRNA-synth_IIc_core"/>
</dbReference>
<dbReference type="InterPro" id="IPR018164">
    <property type="entry name" value="Ala-tRNA-synth_IIc_N"/>
</dbReference>
<dbReference type="InterPro" id="IPR050058">
    <property type="entry name" value="Ala-tRNA_ligase"/>
</dbReference>
<dbReference type="InterPro" id="IPR023033">
    <property type="entry name" value="Ala_tRNA_ligase_euk/bac"/>
</dbReference>
<dbReference type="InterPro" id="IPR003156">
    <property type="entry name" value="DHHA1_dom"/>
</dbReference>
<dbReference type="InterPro" id="IPR018163">
    <property type="entry name" value="Thr/Ala-tRNA-synth_IIc_edit"/>
</dbReference>
<dbReference type="InterPro" id="IPR009000">
    <property type="entry name" value="Transl_B-barrel_sf"/>
</dbReference>
<dbReference type="InterPro" id="IPR012947">
    <property type="entry name" value="tRNA_SAD"/>
</dbReference>
<dbReference type="NCBIfam" id="TIGR00344">
    <property type="entry name" value="alaS"/>
    <property type="match status" value="1"/>
</dbReference>
<dbReference type="PANTHER" id="PTHR11777:SF9">
    <property type="entry name" value="ALANINE--TRNA LIGASE, CYTOPLASMIC"/>
    <property type="match status" value="1"/>
</dbReference>
<dbReference type="PANTHER" id="PTHR11777">
    <property type="entry name" value="ALANYL-TRNA SYNTHETASE"/>
    <property type="match status" value="1"/>
</dbReference>
<dbReference type="Pfam" id="PF02272">
    <property type="entry name" value="DHHA1"/>
    <property type="match status" value="1"/>
</dbReference>
<dbReference type="Pfam" id="PF01411">
    <property type="entry name" value="tRNA-synt_2c"/>
    <property type="match status" value="1"/>
</dbReference>
<dbReference type="Pfam" id="PF07973">
    <property type="entry name" value="tRNA_SAD"/>
    <property type="match status" value="1"/>
</dbReference>
<dbReference type="PRINTS" id="PR00980">
    <property type="entry name" value="TRNASYNTHALA"/>
</dbReference>
<dbReference type="SMART" id="SM00863">
    <property type="entry name" value="tRNA_SAD"/>
    <property type="match status" value="1"/>
</dbReference>
<dbReference type="SUPFAM" id="SSF55681">
    <property type="entry name" value="Class II aaRS and biotin synthetases"/>
    <property type="match status" value="1"/>
</dbReference>
<dbReference type="SUPFAM" id="SSF101353">
    <property type="entry name" value="Putative anticodon-binding domain of alanyl-tRNA synthetase (AlaRS)"/>
    <property type="match status" value="1"/>
</dbReference>
<dbReference type="SUPFAM" id="SSF55186">
    <property type="entry name" value="ThrRS/AlaRS common domain"/>
    <property type="match status" value="1"/>
</dbReference>
<dbReference type="SUPFAM" id="SSF50447">
    <property type="entry name" value="Translation proteins"/>
    <property type="match status" value="1"/>
</dbReference>
<dbReference type="PROSITE" id="PS50860">
    <property type="entry name" value="AA_TRNA_LIGASE_II_ALA"/>
    <property type="match status" value="1"/>
</dbReference>
<reference key="1">
    <citation type="journal article" date="2007" name="J. Bacteriol.">
        <title>The complete genome sequence of the lactic acid bacterial paradigm Lactococcus lactis subsp. cremoris MG1363.</title>
        <authorList>
            <person name="Wegmann U."/>
            <person name="O'Connell-Motherway M."/>
            <person name="Zomer A."/>
            <person name="Buist G."/>
            <person name="Shearman C."/>
            <person name="Canchaya C."/>
            <person name="Ventura M."/>
            <person name="Goesmann A."/>
            <person name="Gasson M.J."/>
            <person name="Kuipers O.P."/>
            <person name="van Sinderen D."/>
            <person name="Kok J."/>
        </authorList>
    </citation>
    <scope>NUCLEOTIDE SEQUENCE [LARGE SCALE GENOMIC DNA]</scope>
    <source>
        <strain>MG1363</strain>
    </source>
</reference>
<keyword id="KW-0030">Aminoacyl-tRNA synthetase</keyword>
<keyword id="KW-0067">ATP-binding</keyword>
<keyword id="KW-0963">Cytoplasm</keyword>
<keyword id="KW-0436">Ligase</keyword>
<keyword id="KW-0479">Metal-binding</keyword>
<keyword id="KW-0547">Nucleotide-binding</keyword>
<keyword id="KW-0648">Protein biosynthesis</keyword>
<keyword id="KW-0694">RNA-binding</keyword>
<keyword id="KW-0820">tRNA-binding</keyword>
<keyword id="KW-0862">Zinc</keyword>
<accession>A2RME6</accession>
<comment type="function">
    <text evidence="1">Catalyzes the attachment of alanine to tRNA(Ala) in a two-step reaction: alanine is first activated by ATP to form Ala-AMP and then transferred to the acceptor end of tRNA(Ala). Also edits incorrectly charged Ser-tRNA(Ala) and Gly-tRNA(Ala) via its editing domain.</text>
</comment>
<comment type="catalytic activity">
    <reaction evidence="1">
        <text>tRNA(Ala) + L-alanine + ATP = L-alanyl-tRNA(Ala) + AMP + diphosphate</text>
        <dbReference type="Rhea" id="RHEA:12540"/>
        <dbReference type="Rhea" id="RHEA-COMP:9657"/>
        <dbReference type="Rhea" id="RHEA-COMP:9923"/>
        <dbReference type="ChEBI" id="CHEBI:30616"/>
        <dbReference type="ChEBI" id="CHEBI:33019"/>
        <dbReference type="ChEBI" id="CHEBI:57972"/>
        <dbReference type="ChEBI" id="CHEBI:78442"/>
        <dbReference type="ChEBI" id="CHEBI:78497"/>
        <dbReference type="ChEBI" id="CHEBI:456215"/>
        <dbReference type="EC" id="6.1.1.7"/>
    </reaction>
</comment>
<comment type="cofactor">
    <cofactor evidence="1">
        <name>Zn(2+)</name>
        <dbReference type="ChEBI" id="CHEBI:29105"/>
    </cofactor>
    <text evidence="1">Binds 1 zinc ion per subunit.</text>
</comment>
<comment type="subcellular location">
    <subcellularLocation>
        <location evidence="1">Cytoplasm</location>
    </subcellularLocation>
</comment>
<comment type="domain">
    <text evidence="1">Consists of three domains; the N-terminal catalytic domain, the editing domain and the C-terminal C-Ala domain. The editing domain removes incorrectly charged amino acids, while the C-Ala domain, along with tRNA(Ala), serves as a bridge to cooperatively bring together the editing and aminoacylation centers thus stimulating deacylation of misacylated tRNAs.</text>
</comment>
<comment type="similarity">
    <text evidence="1">Belongs to the class-II aminoacyl-tRNA synthetase family.</text>
</comment>
<gene>
    <name evidence="1" type="primary">alaS</name>
    <name type="ordered locus">llmg_1906</name>
</gene>
<organism>
    <name type="scientific">Lactococcus lactis subsp. cremoris (strain MG1363)</name>
    <dbReference type="NCBI Taxonomy" id="416870"/>
    <lineage>
        <taxon>Bacteria</taxon>
        <taxon>Bacillati</taxon>
        <taxon>Bacillota</taxon>
        <taxon>Bacilli</taxon>
        <taxon>Lactobacillales</taxon>
        <taxon>Streptococcaceae</taxon>
        <taxon>Lactococcus</taxon>
        <taxon>Lactococcus cremoris subsp. cremoris</taxon>
    </lineage>
</organism>
<protein>
    <recommendedName>
        <fullName evidence="1">Alanine--tRNA ligase</fullName>
        <ecNumber evidence="1">6.1.1.7</ecNumber>
    </recommendedName>
    <alternativeName>
        <fullName evidence="1">Alanyl-tRNA synthetase</fullName>
        <shortName evidence="1">AlaRS</shortName>
    </alternativeName>
</protein>
<name>SYA_LACLM</name>